<comment type="subunit">
    <text evidence="1">Forms oligomers.</text>
</comment>
<comment type="subcellular location">
    <subcellularLocation>
        <location evidence="1">Cytoplasm</location>
        <location evidence="1">Nucleoid</location>
    </subcellularLocation>
</comment>
<comment type="similarity">
    <text evidence="1">Belongs to the MraZ family.</text>
</comment>
<gene>
    <name evidence="1" type="primary">mraZ</name>
    <name type="ordered locus">RSKD131_0405</name>
</gene>
<reference key="1">
    <citation type="journal article" date="2009" name="J. Bacteriol.">
        <title>Complete genome sequence of Rhodobacter sphaeroides KD131.</title>
        <authorList>
            <person name="Lim S.-K."/>
            <person name="Kim S.J."/>
            <person name="Cha S.H."/>
            <person name="Oh Y.-K."/>
            <person name="Rhee H.-J."/>
            <person name="Kim M.-S."/>
            <person name="Lee J.K."/>
        </authorList>
    </citation>
    <scope>NUCLEOTIDE SEQUENCE [LARGE SCALE GENOMIC DNA]</scope>
    <source>
        <strain>KD131 / KCTC 12085</strain>
    </source>
</reference>
<feature type="chain" id="PRO_1000148866" description="Transcriptional regulator MraZ">
    <location>
        <begin position="1"/>
        <end position="168"/>
    </location>
</feature>
<feature type="domain" description="SpoVT-AbrB 1" evidence="2">
    <location>
        <begin position="8"/>
        <end position="51"/>
    </location>
</feature>
<feature type="domain" description="SpoVT-AbrB 2" evidence="2">
    <location>
        <begin position="90"/>
        <end position="140"/>
    </location>
</feature>
<organism>
    <name type="scientific">Cereibacter sphaeroides (strain KD131 / KCTC 12085)</name>
    <name type="common">Rhodobacter sphaeroides</name>
    <dbReference type="NCBI Taxonomy" id="557760"/>
    <lineage>
        <taxon>Bacteria</taxon>
        <taxon>Pseudomonadati</taxon>
        <taxon>Pseudomonadota</taxon>
        <taxon>Alphaproteobacteria</taxon>
        <taxon>Rhodobacterales</taxon>
        <taxon>Paracoccaceae</taxon>
        <taxon>Cereibacter</taxon>
    </lineage>
</organism>
<dbReference type="EMBL" id="CP001150">
    <property type="protein sequence ID" value="ACM00265.1"/>
    <property type="molecule type" value="Genomic_DNA"/>
</dbReference>
<dbReference type="RefSeq" id="WP_002719250.1">
    <property type="nucleotide sequence ID" value="NC_011963.1"/>
</dbReference>
<dbReference type="SMR" id="B9KNI7"/>
<dbReference type="GeneID" id="67445867"/>
<dbReference type="KEGG" id="rsk:RSKD131_0405"/>
<dbReference type="HOGENOM" id="CLU_107907_1_0_5"/>
<dbReference type="GO" id="GO:0005737">
    <property type="term" value="C:cytoplasm"/>
    <property type="evidence" value="ECO:0007669"/>
    <property type="project" value="UniProtKB-UniRule"/>
</dbReference>
<dbReference type="GO" id="GO:0009295">
    <property type="term" value="C:nucleoid"/>
    <property type="evidence" value="ECO:0007669"/>
    <property type="project" value="UniProtKB-SubCell"/>
</dbReference>
<dbReference type="GO" id="GO:0003700">
    <property type="term" value="F:DNA-binding transcription factor activity"/>
    <property type="evidence" value="ECO:0007669"/>
    <property type="project" value="UniProtKB-UniRule"/>
</dbReference>
<dbReference type="GO" id="GO:0000976">
    <property type="term" value="F:transcription cis-regulatory region binding"/>
    <property type="evidence" value="ECO:0007669"/>
    <property type="project" value="TreeGrafter"/>
</dbReference>
<dbReference type="GO" id="GO:2000143">
    <property type="term" value="P:negative regulation of DNA-templated transcription initiation"/>
    <property type="evidence" value="ECO:0007669"/>
    <property type="project" value="TreeGrafter"/>
</dbReference>
<dbReference type="CDD" id="cd16321">
    <property type="entry name" value="MraZ_C"/>
    <property type="match status" value="1"/>
</dbReference>
<dbReference type="CDD" id="cd16320">
    <property type="entry name" value="MraZ_N"/>
    <property type="match status" value="1"/>
</dbReference>
<dbReference type="Gene3D" id="3.40.1550.20">
    <property type="entry name" value="Transcriptional regulator MraZ domain"/>
    <property type="match status" value="1"/>
</dbReference>
<dbReference type="HAMAP" id="MF_01008">
    <property type="entry name" value="MraZ"/>
    <property type="match status" value="1"/>
</dbReference>
<dbReference type="InterPro" id="IPR003444">
    <property type="entry name" value="MraZ"/>
</dbReference>
<dbReference type="InterPro" id="IPR035644">
    <property type="entry name" value="MraZ_C"/>
</dbReference>
<dbReference type="InterPro" id="IPR020603">
    <property type="entry name" value="MraZ_dom"/>
</dbReference>
<dbReference type="InterPro" id="IPR035642">
    <property type="entry name" value="MraZ_N"/>
</dbReference>
<dbReference type="InterPro" id="IPR038619">
    <property type="entry name" value="MraZ_sf"/>
</dbReference>
<dbReference type="InterPro" id="IPR007159">
    <property type="entry name" value="SpoVT-AbrB_dom"/>
</dbReference>
<dbReference type="InterPro" id="IPR037914">
    <property type="entry name" value="SpoVT-AbrB_sf"/>
</dbReference>
<dbReference type="NCBIfam" id="NF001476">
    <property type="entry name" value="PRK00326.2-2"/>
    <property type="match status" value="1"/>
</dbReference>
<dbReference type="PANTHER" id="PTHR34701">
    <property type="entry name" value="TRANSCRIPTIONAL REGULATOR MRAZ"/>
    <property type="match status" value="1"/>
</dbReference>
<dbReference type="PANTHER" id="PTHR34701:SF1">
    <property type="entry name" value="TRANSCRIPTIONAL REGULATOR MRAZ"/>
    <property type="match status" value="1"/>
</dbReference>
<dbReference type="Pfam" id="PF02381">
    <property type="entry name" value="MraZ"/>
    <property type="match status" value="1"/>
</dbReference>
<dbReference type="SUPFAM" id="SSF89447">
    <property type="entry name" value="AbrB/MazE/MraZ-like"/>
    <property type="match status" value="1"/>
</dbReference>
<dbReference type="PROSITE" id="PS51740">
    <property type="entry name" value="SPOVT_ABRB"/>
    <property type="match status" value="2"/>
</dbReference>
<evidence type="ECO:0000255" key="1">
    <source>
        <dbReference type="HAMAP-Rule" id="MF_01008"/>
    </source>
</evidence>
<evidence type="ECO:0000255" key="2">
    <source>
        <dbReference type="PROSITE-ProRule" id="PRU01076"/>
    </source>
</evidence>
<proteinExistence type="inferred from homology"/>
<name>MRAZ_CERSK</name>
<sequence length="168" mass="18745">MAEAFRGEYNQKVDAKARVSIPAPFRRVIEAGDPKFSGGRSSFVLVYGGDRSYVECYTISEMERIEERIRSLPMGTPKRRYLERNMITLALNMELDEDGRIVLPPKGREKLGISPDELKGGTEATFAGTLNKFQIWKADIYAAELAAEEEVLLPPGADMLSLLEETGL</sequence>
<protein>
    <recommendedName>
        <fullName>Transcriptional regulator MraZ</fullName>
    </recommendedName>
</protein>
<accession>B9KNI7</accession>
<keyword id="KW-0963">Cytoplasm</keyword>
<keyword id="KW-0238">DNA-binding</keyword>
<keyword id="KW-0677">Repeat</keyword>
<keyword id="KW-0804">Transcription</keyword>
<keyword id="KW-0805">Transcription regulation</keyword>